<evidence type="ECO:0000255" key="1">
    <source>
        <dbReference type="HAMAP-Rule" id="MF_01020"/>
    </source>
</evidence>
<sequence length="93" mass="10907">MEEYYFVKNFESLFEELSQKIAERPEGSGTVEAFDKGIHHLGKKIIEEAGEVWIAAEYQSDEELAEEMSQLLYWLQVMAHKRGLKLEDIYSYL</sequence>
<protein>
    <recommendedName>
        <fullName evidence="1">Phosphoribosyl-ATP pyrophosphatase</fullName>
        <shortName evidence="1">PRA-PH</shortName>
        <ecNumber evidence="1">3.6.1.31</ecNumber>
    </recommendedName>
</protein>
<gene>
    <name evidence="1" type="primary">hisE</name>
    <name type="ordered locus">cauri_1253</name>
</gene>
<feature type="chain" id="PRO_1000149052" description="Phosphoribosyl-ATP pyrophosphatase">
    <location>
        <begin position="1"/>
        <end position="93"/>
    </location>
</feature>
<name>HIS2_CORA7</name>
<reference key="1">
    <citation type="journal article" date="2010" name="BMC Genomics">
        <title>Complete genome sequence and lifestyle of black-pigmented Corynebacterium aurimucosum ATCC 700975 (formerly C. nigricans CN-1) isolated from a vaginal swab of a woman with spontaneous abortion.</title>
        <authorList>
            <person name="Trost E."/>
            <person name="Gotker S."/>
            <person name="Schneider J."/>
            <person name="Schneiker-Bekel S."/>
            <person name="Szczepanowski R."/>
            <person name="Tilker A."/>
            <person name="Viehoever P."/>
            <person name="Arnold W."/>
            <person name="Bekel T."/>
            <person name="Blom J."/>
            <person name="Gartemann K.H."/>
            <person name="Linke B."/>
            <person name="Goesmann A."/>
            <person name="Puhler A."/>
            <person name="Shukla S.K."/>
            <person name="Tauch A."/>
        </authorList>
    </citation>
    <scope>NUCLEOTIDE SEQUENCE [LARGE SCALE GENOMIC DNA]</scope>
    <source>
        <strain>ATCC 700975 / DSM 44827 / CIP 107346 / CN-1</strain>
    </source>
</reference>
<proteinExistence type="inferred from homology"/>
<dbReference type="EC" id="3.6.1.31" evidence="1"/>
<dbReference type="EMBL" id="CP001601">
    <property type="protein sequence ID" value="ACP32846.1"/>
    <property type="molecule type" value="Genomic_DNA"/>
</dbReference>
<dbReference type="SMR" id="C3PG92"/>
<dbReference type="STRING" id="548476.cauri_1253"/>
<dbReference type="KEGG" id="car:cauri_1253"/>
<dbReference type="eggNOG" id="COG0140">
    <property type="taxonomic scope" value="Bacteria"/>
</dbReference>
<dbReference type="HOGENOM" id="CLU_123337_2_1_11"/>
<dbReference type="UniPathway" id="UPA00031">
    <property type="reaction ID" value="UER00007"/>
</dbReference>
<dbReference type="Proteomes" id="UP000002077">
    <property type="component" value="Chromosome"/>
</dbReference>
<dbReference type="GO" id="GO:0005737">
    <property type="term" value="C:cytoplasm"/>
    <property type="evidence" value="ECO:0007669"/>
    <property type="project" value="UniProtKB-SubCell"/>
</dbReference>
<dbReference type="GO" id="GO:0005524">
    <property type="term" value="F:ATP binding"/>
    <property type="evidence" value="ECO:0007669"/>
    <property type="project" value="UniProtKB-KW"/>
</dbReference>
<dbReference type="GO" id="GO:0004636">
    <property type="term" value="F:phosphoribosyl-ATP diphosphatase activity"/>
    <property type="evidence" value="ECO:0007669"/>
    <property type="project" value="UniProtKB-UniRule"/>
</dbReference>
<dbReference type="GO" id="GO:0000105">
    <property type="term" value="P:L-histidine biosynthetic process"/>
    <property type="evidence" value="ECO:0007669"/>
    <property type="project" value="UniProtKB-UniRule"/>
</dbReference>
<dbReference type="CDD" id="cd11547">
    <property type="entry name" value="NTP-PPase_HisE"/>
    <property type="match status" value="1"/>
</dbReference>
<dbReference type="Gene3D" id="1.10.287.1080">
    <property type="entry name" value="MazG-like"/>
    <property type="match status" value="1"/>
</dbReference>
<dbReference type="HAMAP" id="MF_01020">
    <property type="entry name" value="HisE"/>
    <property type="match status" value="1"/>
</dbReference>
<dbReference type="InterPro" id="IPR008179">
    <property type="entry name" value="HisE"/>
</dbReference>
<dbReference type="InterPro" id="IPR021130">
    <property type="entry name" value="PRib-ATP_PPHydrolase-like"/>
</dbReference>
<dbReference type="NCBIfam" id="TIGR03188">
    <property type="entry name" value="histidine_hisI"/>
    <property type="match status" value="1"/>
</dbReference>
<dbReference type="NCBIfam" id="NF001610">
    <property type="entry name" value="PRK00400.1-1"/>
    <property type="match status" value="1"/>
</dbReference>
<dbReference type="PANTHER" id="PTHR42945">
    <property type="entry name" value="HISTIDINE BIOSYNTHESIS BIFUNCTIONAL PROTEIN"/>
    <property type="match status" value="1"/>
</dbReference>
<dbReference type="PANTHER" id="PTHR42945:SF1">
    <property type="entry name" value="HISTIDINE BIOSYNTHESIS BIFUNCTIONAL PROTEIN HIS7"/>
    <property type="match status" value="1"/>
</dbReference>
<dbReference type="Pfam" id="PF01503">
    <property type="entry name" value="PRA-PH"/>
    <property type="match status" value="1"/>
</dbReference>
<dbReference type="SUPFAM" id="SSF101386">
    <property type="entry name" value="all-alpha NTP pyrophosphatases"/>
    <property type="match status" value="1"/>
</dbReference>
<comment type="catalytic activity">
    <reaction evidence="1">
        <text>1-(5-phospho-beta-D-ribosyl)-ATP + H2O = 1-(5-phospho-beta-D-ribosyl)-5'-AMP + diphosphate + H(+)</text>
        <dbReference type="Rhea" id="RHEA:22828"/>
        <dbReference type="ChEBI" id="CHEBI:15377"/>
        <dbReference type="ChEBI" id="CHEBI:15378"/>
        <dbReference type="ChEBI" id="CHEBI:33019"/>
        <dbReference type="ChEBI" id="CHEBI:59457"/>
        <dbReference type="ChEBI" id="CHEBI:73183"/>
        <dbReference type="EC" id="3.6.1.31"/>
    </reaction>
</comment>
<comment type="pathway">
    <text evidence="1">Amino-acid biosynthesis; L-histidine biosynthesis; L-histidine from 5-phospho-alpha-D-ribose 1-diphosphate: step 2/9.</text>
</comment>
<comment type="subcellular location">
    <subcellularLocation>
        <location evidence="1">Cytoplasm</location>
    </subcellularLocation>
</comment>
<comment type="similarity">
    <text evidence="1">Belongs to the PRA-PH family.</text>
</comment>
<organism>
    <name type="scientific">Corynebacterium aurimucosum (strain ATCC 700975 / DSM 44827 / CIP 107346 / CN-1)</name>
    <name type="common">Corynebacterium nigricans</name>
    <dbReference type="NCBI Taxonomy" id="548476"/>
    <lineage>
        <taxon>Bacteria</taxon>
        <taxon>Bacillati</taxon>
        <taxon>Actinomycetota</taxon>
        <taxon>Actinomycetes</taxon>
        <taxon>Mycobacteriales</taxon>
        <taxon>Corynebacteriaceae</taxon>
        <taxon>Corynebacterium</taxon>
    </lineage>
</organism>
<accession>C3PG92</accession>
<keyword id="KW-0028">Amino-acid biosynthesis</keyword>
<keyword id="KW-0067">ATP-binding</keyword>
<keyword id="KW-0963">Cytoplasm</keyword>
<keyword id="KW-0368">Histidine biosynthesis</keyword>
<keyword id="KW-0378">Hydrolase</keyword>
<keyword id="KW-0547">Nucleotide-binding</keyword>
<keyword id="KW-1185">Reference proteome</keyword>